<protein>
    <recommendedName>
        <fullName>Collagen alpha-1(VIII) chain</fullName>
    </recommendedName>
</protein>
<comment type="function">
    <text evidence="1">Macromolecular component of the subendothelium. Major component of the Descemet's membrane (basement membrane) of corneal endothelial cells. Also a component of the endothelia of blood vessels. Necessary for migration and proliferation of vascular smooth muscle cells and thus, has a potential role in the maintenance of vessel wall integrity and structure, in particular in atherogenesis (By similarity).</text>
</comment>
<comment type="subunit">
    <text evidence="1">Homotrimers, or heterotrimers in association with alpha 2(VIII) type collagens. Four homotrimers can form a tetrahedron stabilized by central interacting C-terminal NC1 trimers (By similarity).</text>
</comment>
<comment type="subcellular location">
    <subcellularLocation>
        <location>Secreted</location>
        <location>Extracellular space</location>
        <location>Extracellular matrix</location>
        <location>Basement membrane</location>
    </subcellularLocation>
</comment>
<comment type="PTM">
    <text evidence="1">Prolines at the third position of the tripeptide repeating unit (G-X-Y) are hydroxylated in some or all of the chains.</text>
</comment>
<comment type="miscellaneous">
    <text>4 consecutive G-P-P tripeptides are present at the C-terminus of the triple-helical region. These may provide high thermal stability of this region.</text>
</comment>
<sequence length="744" mass="73372">MAVQPGPPQLLQVLLTISLGSIRLIQAGAYYGIKPLPPQIPPQMPPQIPQYQPLGQQVPHMPLAKDGLTMGKEMPHAQYGKEYPHLPQYMKEVQPVPRMGKEAVPKKGKEIPLASLRGEQGPRGEPGPRGPPGPPGLPGQGIPGIKGKPGPQGYPGVGKPGMPGMPGKPGAMGMPGAKGEIGPKGEIGPMGIPGPQGPPGPHGLPGIGKPGGPGLPGQPGAKGDRGPKGPPGPPGLQGPKGEKGFGMPGLPGLKGPPGMHGPPGPVGLPGVGKPGVTGFPGPQGPLGKPGPPGEPGPQGPIGVPGVQGPPGLPGVGKPGQDGIPGQPGFPGGKGEQGLPGLPGPPGLPGVGKPGFPGPKGDRGIGGVPGALGPRGEKGPVGAPGMGGPPGEPGLPGIPGPMGPPGAIGFPGPKGEGGIVGPQGPPGPKGEPGLQGFPGKPGFLGEVGPPGIRGLPGPIGPKGEAGHKGLPGLPGVPGLLGPKGEPGIPGDQGLQGPPGIPGITGPSGPIGPPGIPGPKGEPGLPGPPGFPGVGKPGVAGLHGPPGKPGALGPQGQPGLPGPPGPPGPPGPPAVMPPTPAPQGEYLPDMGLGIDGVKTPHAYAAKKGKNGGPAYEMPAFTAELTAPFPPVGAPIKFDRLLYNGRQNYNPQTGIFTCEVPGVYYFAYHVHCKGGNVWVALFKNNEPVMYTYDEYKKGFLDQASGSAVLLLRPGDRVFLQNPSEQAAGLYAGQYVHSSFSGYLLYPM</sequence>
<proteinExistence type="inferred from homology"/>
<evidence type="ECO:0000250" key="1"/>
<evidence type="ECO:0000255" key="2"/>
<evidence type="ECO:0000255" key="3">
    <source>
        <dbReference type="PROSITE-ProRule" id="PRU00368"/>
    </source>
</evidence>
<evidence type="ECO:0000256" key="4">
    <source>
        <dbReference type="SAM" id="MobiDB-lite"/>
    </source>
</evidence>
<reference key="1">
    <citation type="book" date="1990" name="Extracellular Matrix Genes">
        <title>The molecular biology of collagens with short triple-helical domains.</title>
        <editorList>
            <person name="Sandell L.J."/>
            <person name="Boyd C.D."/>
        </editorList>
        <authorList>
            <person name="Ninomiya Y."/>
            <person name="Castagnola P."/>
            <person name="Gerecke D."/>
            <person name="Gordon M.K."/>
            <person name="Jacenko O."/>
            <person name="LuValle P."/>
            <person name="McCarthy M."/>
            <person name="Muragaki Y."/>
            <person name="Nishimura I."/>
            <person name="Oh S."/>
            <person name="Rosenblum N."/>
            <person name="Sato N."/>
            <person name="Sugrue S."/>
            <person name="Taylor R."/>
            <person name="Vasios G."/>
            <person name="Yamaguchi N."/>
            <person name="Olsen B.R."/>
        </authorList>
    </citation>
    <scope>NUCLEOTIDE SEQUENCE</scope>
</reference>
<dbReference type="PIR" id="S23298">
    <property type="entry name" value="S23298"/>
</dbReference>
<dbReference type="SMR" id="Q7LZR2"/>
<dbReference type="FunCoup" id="Q7LZR2">
    <property type="interactions" value="4"/>
</dbReference>
<dbReference type="STRING" id="9031.ENSGALP00000024565"/>
<dbReference type="GlyGen" id="Q7LZR2">
    <property type="glycosylation" value="1 site"/>
</dbReference>
<dbReference type="VEuPathDB" id="HostDB:geneid_418378"/>
<dbReference type="VEuPathDB" id="HostDB:geneid_419504"/>
<dbReference type="InParanoid" id="Q7LZR2"/>
<dbReference type="OrthoDB" id="6139560at2759"/>
<dbReference type="PhylomeDB" id="Q7LZR2"/>
<dbReference type="Proteomes" id="UP000000539">
    <property type="component" value="Unassembled WGS sequence"/>
</dbReference>
<dbReference type="GO" id="GO:0005604">
    <property type="term" value="C:basement membrane"/>
    <property type="evidence" value="ECO:0007669"/>
    <property type="project" value="UniProtKB-SubCell"/>
</dbReference>
<dbReference type="GO" id="GO:0005581">
    <property type="term" value="C:collagen trimer"/>
    <property type="evidence" value="ECO:0007669"/>
    <property type="project" value="UniProtKB-KW"/>
</dbReference>
<dbReference type="GO" id="GO:0062023">
    <property type="term" value="C:collagen-containing extracellular matrix"/>
    <property type="evidence" value="ECO:0000318"/>
    <property type="project" value="GO_Central"/>
</dbReference>
<dbReference type="GO" id="GO:0005615">
    <property type="term" value="C:extracellular space"/>
    <property type="evidence" value="ECO:0000318"/>
    <property type="project" value="GO_Central"/>
</dbReference>
<dbReference type="GO" id="GO:0030020">
    <property type="term" value="F:extracellular matrix structural constituent conferring tensile strength"/>
    <property type="evidence" value="ECO:0000318"/>
    <property type="project" value="GO_Central"/>
</dbReference>
<dbReference type="GO" id="GO:0001525">
    <property type="term" value="P:angiogenesis"/>
    <property type="evidence" value="ECO:0007669"/>
    <property type="project" value="UniProtKB-KW"/>
</dbReference>
<dbReference type="GO" id="GO:0007155">
    <property type="term" value="P:cell adhesion"/>
    <property type="evidence" value="ECO:0007669"/>
    <property type="project" value="UniProtKB-KW"/>
</dbReference>
<dbReference type="FunFam" id="2.60.120.40:FF:000001">
    <property type="entry name" value="Complement C1q B chain"/>
    <property type="match status" value="1"/>
</dbReference>
<dbReference type="Gene3D" id="2.60.120.40">
    <property type="match status" value="1"/>
</dbReference>
<dbReference type="InterPro" id="IPR001073">
    <property type="entry name" value="C1q_dom"/>
</dbReference>
<dbReference type="InterPro" id="IPR008160">
    <property type="entry name" value="Collagen"/>
</dbReference>
<dbReference type="InterPro" id="IPR050392">
    <property type="entry name" value="Collagen/C1q_domain"/>
</dbReference>
<dbReference type="InterPro" id="IPR008983">
    <property type="entry name" value="Tumour_necrosis_fac-like_dom"/>
</dbReference>
<dbReference type="PANTHER" id="PTHR15427:SF49">
    <property type="entry name" value="COLLAGEN ALPHA-1(VIII) CHAIN"/>
    <property type="match status" value="1"/>
</dbReference>
<dbReference type="PANTHER" id="PTHR15427">
    <property type="entry name" value="EMILIN ELASTIN MICROFIBRIL INTERFACE-LOCATED PROTEIN ELASTIN MICROFIBRIL INTERFACER"/>
    <property type="match status" value="1"/>
</dbReference>
<dbReference type="Pfam" id="PF00386">
    <property type="entry name" value="C1q"/>
    <property type="match status" value="1"/>
</dbReference>
<dbReference type="Pfam" id="PF01391">
    <property type="entry name" value="Collagen"/>
    <property type="match status" value="2"/>
</dbReference>
<dbReference type="PRINTS" id="PR00007">
    <property type="entry name" value="COMPLEMNTC1Q"/>
</dbReference>
<dbReference type="SMART" id="SM00110">
    <property type="entry name" value="C1Q"/>
    <property type="match status" value="1"/>
</dbReference>
<dbReference type="SUPFAM" id="SSF49842">
    <property type="entry name" value="TNF-like"/>
    <property type="match status" value="1"/>
</dbReference>
<dbReference type="PROSITE" id="PS50871">
    <property type="entry name" value="C1Q"/>
    <property type="match status" value="1"/>
</dbReference>
<keyword id="KW-0037">Angiogenesis</keyword>
<keyword id="KW-0084">Basement membrane</keyword>
<keyword id="KW-0130">Cell adhesion</keyword>
<keyword id="KW-0176">Collagen</keyword>
<keyword id="KW-0272">Extracellular matrix</keyword>
<keyword id="KW-0379">Hydroxylation</keyword>
<keyword id="KW-1185">Reference proteome</keyword>
<keyword id="KW-0677">Repeat</keyword>
<keyword id="KW-0964">Secreted</keyword>
<keyword id="KW-0732">Signal</keyword>
<organism>
    <name type="scientific">Gallus gallus</name>
    <name type="common">Chicken</name>
    <dbReference type="NCBI Taxonomy" id="9031"/>
    <lineage>
        <taxon>Eukaryota</taxon>
        <taxon>Metazoa</taxon>
        <taxon>Chordata</taxon>
        <taxon>Craniata</taxon>
        <taxon>Vertebrata</taxon>
        <taxon>Euteleostomi</taxon>
        <taxon>Archelosauria</taxon>
        <taxon>Archosauria</taxon>
        <taxon>Dinosauria</taxon>
        <taxon>Saurischia</taxon>
        <taxon>Theropoda</taxon>
        <taxon>Coelurosauria</taxon>
        <taxon>Aves</taxon>
        <taxon>Neognathae</taxon>
        <taxon>Galloanserae</taxon>
        <taxon>Galliformes</taxon>
        <taxon>Phasianidae</taxon>
        <taxon>Phasianinae</taxon>
        <taxon>Gallus</taxon>
    </lineage>
</organism>
<feature type="signal peptide" evidence="2">
    <location>
        <begin position="1"/>
        <end position="27"/>
    </location>
</feature>
<feature type="chain" id="PRO_0000285969" description="Collagen alpha-1(VIII) chain">
    <location>
        <begin position="28"/>
        <end position="744"/>
    </location>
</feature>
<feature type="domain" description="C1q" evidence="3">
    <location>
        <begin position="611"/>
        <end position="744"/>
    </location>
</feature>
<feature type="region of interest" description="Nonhelical region (NC2)">
    <location>
        <begin position="29"/>
        <end position="117"/>
    </location>
</feature>
<feature type="region of interest" description="Disordered" evidence="4">
    <location>
        <begin position="101"/>
        <end position="434"/>
    </location>
</feature>
<feature type="region of interest" description="Triple-helical region">
    <location>
        <begin position="118"/>
        <end position="571"/>
    </location>
</feature>
<feature type="region of interest" description="Disordered" evidence="4">
    <location>
        <begin position="463"/>
        <end position="584"/>
    </location>
</feature>
<feature type="region of interest" description="Nonhelical region (NC1)">
    <location>
        <begin position="572"/>
        <end position="744"/>
    </location>
</feature>
<feature type="compositionally biased region" description="Basic and acidic residues" evidence="4">
    <location>
        <begin position="101"/>
        <end position="110"/>
    </location>
</feature>
<feature type="compositionally biased region" description="Pro residues" evidence="4">
    <location>
        <begin position="128"/>
        <end position="137"/>
    </location>
</feature>
<feature type="compositionally biased region" description="Low complexity" evidence="4">
    <location>
        <begin position="168"/>
        <end position="190"/>
    </location>
</feature>
<feature type="compositionally biased region" description="Gly residues" evidence="4">
    <location>
        <begin position="203"/>
        <end position="217"/>
    </location>
</feature>
<feature type="compositionally biased region" description="Pro residues" evidence="4">
    <location>
        <begin position="288"/>
        <end position="298"/>
    </location>
</feature>
<feature type="compositionally biased region" description="Gly residues" evidence="4">
    <location>
        <begin position="328"/>
        <end position="337"/>
    </location>
</feature>
<feature type="compositionally biased region" description="Pro residues" evidence="4">
    <location>
        <begin position="389"/>
        <end position="403"/>
    </location>
</feature>
<feature type="compositionally biased region" description="Gly residues" evidence="4">
    <location>
        <begin position="411"/>
        <end position="420"/>
    </location>
</feature>
<feature type="compositionally biased region" description="Low complexity" evidence="4">
    <location>
        <begin position="469"/>
        <end position="506"/>
    </location>
</feature>
<feature type="compositionally biased region" description="Low complexity" evidence="4">
    <location>
        <begin position="540"/>
        <end position="556"/>
    </location>
</feature>
<feature type="compositionally biased region" description="Pro residues" evidence="4">
    <location>
        <begin position="558"/>
        <end position="579"/>
    </location>
</feature>
<accession>Q7LZR2</accession>
<name>CO8A1_CHICK</name>
<gene>
    <name type="primary">COL8A1</name>
</gene>